<dbReference type="EC" id="2.1.1.196" evidence="1"/>
<dbReference type="EMBL" id="BA000011">
    <property type="protein sequence ID" value="BAB60088.1"/>
    <property type="molecule type" value="Genomic_DNA"/>
</dbReference>
<dbReference type="RefSeq" id="WP_010917177.1">
    <property type="nucleotide sequence ID" value="NC_002689.2"/>
</dbReference>
<dbReference type="SMR" id="Q97A64"/>
<dbReference type="STRING" id="273116.gene:9381738"/>
<dbReference type="PaxDb" id="273116-14325163"/>
<dbReference type="GeneID" id="1442025"/>
<dbReference type="KEGG" id="tvo:TVG0972073"/>
<dbReference type="eggNOG" id="arCOG00977">
    <property type="taxonomic scope" value="Archaea"/>
</dbReference>
<dbReference type="HOGENOM" id="CLU_094143_0_0_2"/>
<dbReference type="OrthoDB" id="6027at2157"/>
<dbReference type="PhylomeDB" id="Q97A64"/>
<dbReference type="UniPathway" id="UPA00148">
    <property type="reaction ID" value="UER00229"/>
</dbReference>
<dbReference type="Proteomes" id="UP000001017">
    <property type="component" value="Chromosome"/>
</dbReference>
<dbReference type="GO" id="GO:0043776">
    <property type="term" value="F:cobalt-precorrin-6B C5-methyltransferase activity"/>
    <property type="evidence" value="ECO:0007669"/>
    <property type="project" value="RHEA"/>
</dbReference>
<dbReference type="GO" id="GO:0008276">
    <property type="term" value="F:protein methyltransferase activity"/>
    <property type="evidence" value="ECO:0007669"/>
    <property type="project" value="InterPro"/>
</dbReference>
<dbReference type="GO" id="GO:0019251">
    <property type="term" value="P:anaerobic cobalamin biosynthetic process"/>
    <property type="evidence" value="ECO:0007669"/>
    <property type="project" value="UniProtKB-UniRule"/>
</dbReference>
<dbReference type="GO" id="GO:0032259">
    <property type="term" value="P:methylation"/>
    <property type="evidence" value="ECO:0007669"/>
    <property type="project" value="UniProtKB-KW"/>
</dbReference>
<dbReference type="CDD" id="cd02440">
    <property type="entry name" value="AdoMet_MTases"/>
    <property type="match status" value="1"/>
</dbReference>
<dbReference type="Gene3D" id="3.40.50.150">
    <property type="entry name" value="Vaccinia Virus protein VP39"/>
    <property type="match status" value="1"/>
</dbReference>
<dbReference type="HAMAP" id="MF_00786">
    <property type="entry name" value="CbiT"/>
    <property type="match status" value="1"/>
</dbReference>
<dbReference type="InterPro" id="IPR023475">
    <property type="entry name" value="CbiT"/>
</dbReference>
<dbReference type="InterPro" id="IPR014008">
    <property type="entry name" value="Cbl_synth_MTase_CbiT"/>
</dbReference>
<dbReference type="InterPro" id="IPR050714">
    <property type="entry name" value="Cobalamin_biosynth_MTase"/>
</dbReference>
<dbReference type="InterPro" id="IPR025714">
    <property type="entry name" value="Methyltranfer_dom"/>
</dbReference>
<dbReference type="InterPro" id="IPR029063">
    <property type="entry name" value="SAM-dependent_MTases_sf"/>
</dbReference>
<dbReference type="NCBIfam" id="TIGR02469">
    <property type="entry name" value="CbiT"/>
    <property type="match status" value="1"/>
</dbReference>
<dbReference type="PANTHER" id="PTHR43182">
    <property type="entry name" value="COBALT-PRECORRIN-6B C(15)-METHYLTRANSFERASE (DECARBOXYLATING)"/>
    <property type="match status" value="1"/>
</dbReference>
<dbReference type="PANTHER" id="PTHR43182:SF1">
    <property type="entry name" value="COBALT-PRECORRIN-7 C(5)-METHYLTRANSFERASE"/>
    <property type="match status" value="1"/>
</dbReference>
<dbReference type="Pfam" id="PF13847">
    <property type="entry name" value="Methyltransf_31"/>
    <property type="match status" value="1"/>
</dbReference>
<dbReference type="SUPFAM" id="SSF53335">
    <property type="entry name" value="S-adenosyl-L-methionine-dependent methyltransferases"/>
    <property type="match status" value="1"/>
</dbReference>
<reference key="1">
    <citation type="journal article" date="2000" name="Proc. Natl. Acad. Sci. U.S.A.">
        <title>Archaeal adaptation to higher temperatures revealed by genomic sequence of Thermoplasma volcanium.</title>
        <authorList>
            <person name="Kawashima T."/>
            <person name="Amano N."/>
            <person name="Koike H."/>
            <person name="Makino S."/>
            <person name="Higuchi S."/>
            <person name="Kawashima-Ohya Y."/>
            <person name="Watanabe K."/>
            <person name="Yamazaki M."/>
            <person name="Kanehori K."/>
            <person name="Kawamoto T."/>
            <person name="Nunoshiba T."/>
            <person name="Yamamoto Y."/>
            <person name="Aramaki H."/>
            <person name="Makino K."/>
            <person name="Suzuki M."/>
        </authorList>
    </citation>
    <scope>NUCLEOTIDE SEQUENCE [LARGE SCALE GENOMIC DNA]</scope>
    <source>
        <strain>ATCC 51530 / DSM 4299 / JCM 9571 / NBRC 15438 / GSS1</strain>
    </source>
</reference>
<accession>Q97A64</accession>
<protein>
    <recommendedName>
        <fullName evidence="1">Probable cobalt-precorrin-6B C(15)-methyltransferase (decarboxylating)</fullName>
        <ecNumber evidence="1">2.1.1.196</ecNumber>
    </recommendedName>
</protein>
<sequence>MESEKSKFDYYIVTPDSLFERVDGIPMTKEEIRLISLNRLGVRNGGHFLDIGTGTGSVAVDMSRLAGPNGKIIALDRDEKAIKLARINLDRLSPYKNIQLVLADAYAYSPADSFDAIFIGGGTGDLPNLVSKYVPFLKSGARVVINAIQVKTLNDAVESLELNNFRNVSVIEVQISVGMKTGSSYAMIARNPIFVVSGEQP</sequence>
<keyword id="KW-0169">Cobalamin biosynthesis</keyword>
<keyword id="KW-0489">Methyltransferase</keyword>
<keyword id="KW-0949">S-adenosyl-L-methionine</keyword>
<keyword id="KW-0808">Transferase</keyword>
<evidence type="ECO:0000255" key="1">
    <source>
        <dbReference type="HAMAP-Rule" id="MF_00786"/>
    </source>
</evidence>
<name>CBIT_THEVO</name>
<organism>
    <name type="scientific">Thermoplasma volcanium (strain ATCC 51530 / DSM 4299 / JCM 9571 / NBRC 15438 / GSS1)</name>
    <dbReference type="NCBI Taxonomy" id="273116"/>
    <lineage>
        <taxon>Archaea</taxon>
        <taxon>Methanobacteriati</taxon>
        <taxon>Thermoplasmatota</taxon>
        <taxon>Thermoplasmata</taxon>
        <taxon>Thermoplasmatales</taxon>
        <taxon>Thermoplasmataceae</taxon>
        <taxon>Thermoplasma</taxon>
    </lineage>
</organism>
<feature type="chain" id="PRO_0000134947" description="Probable cobalt-precorrin-6B C(15)-methyltransferase (decarboxylating)">
    <location>
        <begin position="1"/>
        <end position="201"/>
    </location>
</feature>
<feature type="binding site" evidence="1">
    <location>
        <position position="28"/>
    </location>
    <ligand>
        <name>S-adenosyl-L-methionine</name>
        <dbReference type="ChEBI" id="CHEBI:59789"/>
    </ligand>
</feature>
<feature type="binding site" evidence="1">
    <location>
        <begin position="52"/>
        <end position="56"/>
    </location>
    <ligand>
        <name>S-adenosyl-L-methionine</name>
        <dbReference type="ChEBI" id="CHEBI:59789"/>
    </ligand>
</feature>
<feature type="binding site" evidence="1">
    <location>
        <position position="76"/>
    </location>
    <ligand>
        <name>S-adenosyl-L-methionine</name>
        <dbReference type="ChEBI" id="CHEBI:59789"/>
    </ligand>
</feature>
<feature type="binding site" evidence="1">
    <location>
        <position position="105"/>
    </location>
    <ligand>
        <name>S-adenosyl-L-methionine</name>
        <dbReference type="ChEBI" id="CHEBI:59789"/>
    </ligand>
</feature>
<proteinExistence type="inferred from homology"/>
<comment type="function">
    <text evidence="1">Catalyzes the methylation of C-15 in cobalt-precorrin-6B followed by the decarboxylation of C-12 to form cobalt-precorrin-7.</text>
</comment>
<comment type="catalytic activity">
    <reaction evidence="1">
        <text>Co-precorrin-6B + S-adenosyl-L-methionine = Co-precorrin-7 + S-adenosyl-L-homocysteine + CO2</text>
        <dbReference type="Rhea" id="RHEA:36067"/>
        <dbReference type="ChEBI" id="CHEBI:16526"/>
        <dbReference type="ChEBI" id="CHEBI:57856"/>
        <dbReference type="ChEBI" id="CHEBI:59789"/>
        <dbReference type="ChEBI" id="CHEBI:70791"/>
        <dbReference type="ChEBI" id="CHEBI:72780"/>
        <dbReference type="EC" id="2.1.1.196"/>
    </reaction>
</comment>
<comment type="pathway">
    <text evidence="1">Cofactor biosynthesis; adenosylcobalamin biosynthesis; cob(II)yrinate a,c-diamide from sirohydrochlorin (anaerobic route): step 8/10.</text>
</comment>
<comment type="similarity">
    <text evidence="1">Belongs to the methyltransferase superfamily. Archaeal-type CbiT family.</text>
</comment>
<gene>
    <name evidence="1" type="primary">cbiT</name>
    <name type="ordered locus">TV0946</name>
    <name type="ORF">TVG0972073</name>
</gene>